<feature type="chain" id="PRO_0000139181" description="Methionine--tRNA ligase">
    <location>
        <begin position="1"/>
        <end position="675"/>
    </location>
</feature>
<feature type="domain" description="tRNA-binding" evidence="1">
    <location>
        <begin position="573"/>
        <end position="675"/>
    </location>
</feature>
<feature type="short sequence motif" description="'HIGH' region">
    <location>
        <begin position="15"/>
        <end position="25"/>
    </location>
</feature>
<feature type="short sequence motif" description="'KMSKS' region">
    <location>
        <begin position="332"/>
        <end position="336"/>
    </location>
</feature>
<feature type="binding site" evidence="1">
    <location>
        <position position="146"/>
    </location>
    <ligand>
        <name>Zn(2+)</name>
        <dbReference type="ChEBI" id="CHEBI:29105"/>
    </ligand>
</feature>
<feature type="binding site" evidence="1">
    <location>
        <position position="149"/>
    </location>
    <ligand>
        <name>Zn(2+)</name>
        <dbReference type="ChEBI" id="CHEBI:29105"/>
    </ligand>
</feature>
<feature type="binding site" evidence="1">
    <location>
        <position position="159"/>
    </location>
    <ligand>
        <name>Zn(2+)</name>
        <dbReference type="ChEBI" id="CHEBI:29105"/>
    </ligand>
</feature>
<feature type="binding site" evidence="1">
    <location>
        <position position="162"/>
    </location>
    <ligand>
        <name>Zn(2+)</name>
        <dbReference type="ChEBI" id="CHEBI:29105"/>
    </ligand>
</feature>
<feature type="binding site" evidence="1">
    <location>
        <position position="335"/>
    </location>
    <ligand>
        <name>ATP</name>
        <dbReference type="ChEBI" id="CHEBI:30616"/>
    </ligand>
</feature>
<name>SYM_YERPS</name>
<gene>
    <name evidence="1" type="primary">metG</name>
    <name type="ordered locus">YPTB1534</name>
</gene>
<comment type="function">
    <text evidence="1">Is required not only for elongation of protein synthesis but also for the initiation of all mRNA translation through initiator tRNA(fMet) aminoacylation.</text>
</comment>
<comment type="catalytic activity">
    <reaction evidence="1">
        <text>tRNA(Met) + L-methionine + ATP = L-methionyl-tRNA(Met) + AMP + diphosphate</text>
        <dbReference type="Rhea" id="RHEA:13481"/>
        <dbReference type="Rhea" id="RHEA-COMP:9667"/>
        <dbReference type="Rhea" id="RHEA-COMP:9698"/>
        <dbReference type="ChEBI" id="CHEBI:30616"/>
        <dbReference type="ChEBI" id="CHEBI:33019"/>
        <dbReference type="ChEBI" id="CHEBI:57844"/>
        <dbReference type="ChEBI" id="CHEBI:78442"/>
        <dbReference type="ChEBI" id="CHEBI:78530"/>
        <dbReference type="ChEBI" id="CHEBI:456215"/>
        <dbReference type="EC" id="6.1.1.10"/>
    </reaction>
</comment>
<comment type="cofactor">
    <cofactor evidence="1">
        <name>Zn(2+)</name>
        <dbReference type="ChEBI" id="CHEBI:29105"/>
    </cofactor>
    <text evidence="1">Binds 1 zinc ion per subunit.</text>
</comment>
<comment type="subunit">
    <text evidence="1">Homodimer.</text>
</comment>
<comment type="subcellular location">
    <subcellularLocation>
        <location evidence="1">Cytoplasm</location>
    </subcellularLocation>
</comment>
<comment type="similarity">
    <text evidence="1">Belongs to the class-I aminoacyl-tRNA synthetase family. MetG type 1 subfamily.</text>
</comment>
<keyword id="KW-0030">Aminoacyl-tRNA synthetase</keyword>
<keyword id="KW-0067">ATP-binding</keyword>
<keyword id="KW-0963">Cytoplasm</keyword>
<keyword id="KW-0436">Ligase</keyword>
<keyword id="KW-0479">Metal-binding</keyword>
<keyword id="KW-0547">Nucleotide-binding</keyword>
<keyword id="KW-0648">Protein biosynthesis</keyword>
<keyword id="KW-0694">RNA-binding</keyword>
<keyword id="KW-0820">tRNA-binding</keyword>
<keyword id="KW-0862">Zinc</keyword>
<protein>
    <recommendedName>
        <fullName evidence="1">Methionine--tRNA ligase</fullName>
        <ecNumber evidence="1">6.1.1.10</ecNumber>
    </recommendedName>
    <alternativeName>
        <fullName evidence="1">Methionyl-tRNA synthetase</fullName>
        <shortName evidence="1">MetRS</shortName>
    </alternativeName>
</protein>
<evidence type="ECO:0000255" key="1">
    <source>
        <dbReference type="HAMAP-Rule" id="MF_00098"/>
    </source>
</evidence>
<reference key="1">
    <citation type="journal article" date="2004" name="Proc. Natl. Acad. Sci. U.S.A.">
        <title>Insights into the evolution of Yersinia pestis through whole-genome comparison with Yersinia pseudotuberculosis.</title>
        <authorList>
            <person name="Chain P.S.G."/>
            <person name="Carniel E."/>
            <person name="Larimer F.W."/>
            <person name="Lamerdin J."/>
            <person name="Stoutland P.O."/>
            <person name="Regala W.M."/>
            <person name="Georgescu A.M."/>
            <person name="Vergez L.M."/>
            <person name="Land M.L."/>
            <person name="Motin V.L."/>
            <person name="Brubaker R.R."/>
            <person name="Fowler J."/>
            <person name="Hinnebusch J."/>
            <person name="Marceau M."/>
            <person name="Medigue C."/>
            <person name="Simonet M."/>
            <person name="Chenal-Francisque V."/>
            <person name="Souza B."/>
            <person name="Dacheux D."/>
            <person name="Elliott J.M."/>
            <person name="Derbise A."/>
            <person name="Hauser L.J."/>
            <person name="Garcia E."/>
        </authorList>
    </citation>
    <scope>NUCLEOTIDE SEQUENCE [LARGE SCALE GENOMIC DNA]</scope>
    <source>
        <strain>IP32953</strain>
    </source>
</reference>
<proteinExistence type="inferred from homology"/>
<accession>Q66C72</accession>
<sequence>MAQVAKKILVTCALPYANGSIHLGHMLEHIQADIWVRFQRMRGNQVHFICADDAHGTPIMLKAQQMGIEPEQMIAEMSQEHQQDFAGFAISYDNYHSTHSDENRELSSLIYGRLKANGYIKNRTISQLYDPEKGMFLPDRFVKGTCPKCKAPEQYGDNCEVCGATYSPTELIDPKSAVSGATPVMRESEHFFFDLPAFSDMLQAWTRSGALQEQVANKMQEWFDSGLQQWDITRDAPYFGFEVPDAPGKYFYVWLDAPIGYMGAFKNLCDKRGDLDFDEFWGKDAKTDLYHFIGKDIVYFHSLFWPAMLEGSNFRKPTNLFVHGYVTVNGAKMSKSRGTFIKAGTYLKYLDADCLRYYYAAKLSSRIDDIDLNLEDFVQRVNADIVNKVVNLASRNAGFINKRFAGQLADQLADPVLYKTFTDAATSIADAYNNRESGKAIREIMALADVANRYVDEQAPWVVAKQEGHDADLHAICSMGINLFRVLMTYLKPVLPSLTERTEAFLNTELTWDSIEQPLLGHSITAFKALFNRIDLDKVNEMVASSKEDMAPATRVTGPLADDPIQETISFDDFAKVDMRIALIQQAEFVEGSDKLLKLTLELGGETRQIFSGIRSAYPDPKALEGRMTVMVANLAPRKMRFGVSEGMVMTAGPGGSDIFLLSPDSGAQPGMQVK</sequence>
<organism>
    <name type="scientific">Yersinia pseudotuberculosis serotype I (strain IP32953)</name>
    <dbReference type="NCBI Taxonomy" id="273123"/>
    <lineage>
        <taxon>Bacteria</taxon>
        <taxon>Pseudomonadati</taxon>
        <taxon>Pseudomonadota</taxon>
        <taxon>Gammaproteobacteria</taxon>
        <taxon>Enterobacterales</taxon>
        <taxon>Yersiniaceae</taxon>
        <taxon>Yersinia</taxon>
    </lineage>
</organism>
<dbReference type="EC" id="6.1.1.10" evidence="1"/>
<dbReference type="EMBL" id="BX936398">
    <property type="protein sequence ID" value="CAH20773.1"/>
    <property type="molecule type" value="Genomic_DNA"/>
</dbReference>
<dbReference type="RefSeq" id="WP_011192110.1">
    <property type="nucleotide sequence ID" value="NC_006155.1"/>
</dbReference>
<dbReference type="SMR" id="Q66C72"/>
<dbReference type="KEGG" id="ypo:BZ17_981"/>
<dbReference type="KEGG" id="yps:YPTB1534"/>
<dbReference type="PATRIC" id="fig|273123.14.peg.1041"/>
<dbReference type="Proteomes" id="UP000001011">
    <property type="component" value="Chromosome"/>
</dbReference>
<dbReference type="GO" id="GO:0005829">
    <property type="term" value="C:cytosol"/>
    <property type="evidence" value="ECO:0007669"/>
    <property type="project" value="TreeGrafter"/>
</dbReference>
<dbReference type="GO" id="GO:0005524">
    <property type="term" value="F:ATP binding"/>
    <property type="evidence" value="ECO:0007669"/>
    <property type="project" value="UniProtKB-UniRule"/>
</dbReference>
<dbReference type="GO" id="GO:0046872">
    <property type="term" value="F:metal ion binding"/>
    <property type="evidence" value="ECO:0007669"/>
    <property type="project" value="UniProtKB-KW"/>
</dbReference>
<dbReference type="GO" id="GO:0004825">
    <property type="term" value="F:methionine-tRNA ligase activity"/>
    <property type="evidence" value="ECO:0007669"/>
    <property type="project" value="UniProtKB-UniRule"/>
</dbReference>
<dbReference type="GO" id="GO:0000049">
    <property type="term" value="F:tRNA binding"/>
    <property type="evidence" value="ECO:0007669"/>
    <property type="project" value="UniProtKB-KW"/>
</dbReference>
<dbReference type="GO" id="GO:0006431">
    <property type="term" value="P:methionyl-tRNA aminoacylation"/>
    <property type="evidence" value="ECO:0007669"/>
    <property type="project" value="UniProtKB-UniRule"/>
</dbReference>
<dbReference type="CDD" id="cd07957">
    <property type="entry name" value="Anticodon_Ia_Met"/>
    <property type="match status" value="1"/>
</dbReference>
<dbReference type="CDD" id="cd00814">
    <property type="entry name" value="MetRS_core"/>
    <property type="match status" value="1"/>
</dbReference>
<dbReference type="CDD" id="cd02800">
    <property type="entry name" value="tRNA_bind_EcMetRS_like"/>
    <property type="match status" value="1"/>
</dbReference>
<dbReference type="FunFam" id="1.10.730.10:FF:000005">
    <property type="entry name" value="Methionine--tRNA ligase"/>
    <property type="match status" value="1"/>
</dbReference>
<dbReference type="FunFam" id="2.20.28.20:FF:000001">
    <property type="entry name" value="Methionine--tRNA ligase"/>
    <property type="match status" value="1"/>
</dbReference>
<dbReference type="FunFam" id="2.40.50.140:FF:000042">
    <property type="entry name" value="Methionine--tRNA ligase"/>
    <property type="match status" value="1"/>
</dbReference>
<dbReference type="Gene3D" id="3.40.50.620">
    <property type="entry name" value="HUPs"/>
    <property type="match status" value="1"/>
</dbReference>
<dbReference type="Gene3D" id="1.10.730.10">
    <property type="entry name" value="Isoleucyl-tRNA Synthetase, Domain 1"/>
    <property type="match status" value="1"/>
</dbReference>
<dbReference type="Gene3D" id="2.20.28.20">
    <property type="entry name" value="Methionyl-tRNA synthetase, Zn-domain"/>
    <property type="match status" value="1"/>
</dbReference>
<dbReference type="Gene3D" id="2.40.50.140">
    <property type="entry name" value="Nucleic acid-binding proteins"/>
    <property type="match status" value="1"/>
</dbReference>
<dbReference type="HAMAP" id="MF_00098">
    <property type="entry name" value="Met_tRNA_synth_type1"/>
    <property type="match status" value="1"/>
</dbReference>
<dbReference type="InterPro" id="IPR001412">
    <property type="entry name" value="aa-tRNA-synth_I_CS"/>
</dbReference>
<dbReference type="InterPro" id="IPR041872">
    <property type="entry name" value="Anticodon_Met"/>
</dbReference>
<dbReference type="InterPro" id="IPR004495">
    <property type="entry name" value="Met-tRNA-synth_bsu_C"/>
</dbReference>
<dbReference type="InterPro" id="IPR023458">
    <property type="entry name" value="Met-tRNA_ligase_1"/>
</dbReference>
<dbReference type="InterPro" id="IPR014758">
    <property type="entry name" value="Met-tRNA_synth"/>
</dbReference>
<dbReference type="InterPro" id="IPR015413">
    <property type="entry name" value="Methionyl/Leucyl_tRNA_Synth"/>
</dbReference>
<dbReference type="InterPro" id="IPR033911">
    <property type="entry name" value="MetRS_core"/>
</dbReference>
<dbReference type="InterPro" id="IPR029038">
    <property type="entry name" value="MetRS_Zn"/>
</dbReference>
<dbReference type="InterPro" id="IPR012340">
    <property type="entry name" value="NA-bd_OB-fold"/>
</dbReference>
<dbReference type="InterPro" id="IPR014729">
    <property type="entry name" value="Rossmann-like_a/b/a_fold"/>
</dbReference>
<dbReference type="InterPro" id="IPR002547">
    <property type="entry name" value="tRNA-bd_dom"/>
</dbReference>
<dbReference type="InterPro" id="IPR009080">
    <property type="entry name" value="tRNAsynth_Ia_anticodon-bd"/>
</dbReference>
<dbReference type="NCBIfam" id="TIGR00398">
    <property type="entry name" value="metG"/>
    <property type="match status" value="1"/>
</dbReference>
<dbReference type="NCBIfam" id="TIGR00399">
    <property type="entry name" value="metG_C_term"/>
    <property type="match status" value="1"/>
</dbReference>
<dbReference type="NCBIfam" id="NF001100">
    <property type="entry name" value="PRK00133.1"/>
    <property type="match status" value="1"/>
</dbReference>
<dbReference type="PANTHER" id="PTHR45765">
    <property type="entry name" value="METHIONINE--TRNA LIGASE"/>
    <property type="match status" value="1"/>
</dbReference>
<dbReference type="PANTHER" id="PTHR45765:SF1">
    <property type="entry name" value="METHIONINE--TRNA LIGASE, CYTOPLASMIC"/>
    <property type="match status" value="1"/>
</dbReference>
<dbReference type="Pfam" id="PF19303">
    <property type="entry name" value="Anticodon_3"/>
    <property type="match status" value="1"/>
</dbReference>
<dbReference type="Pfam" id="PF09334">
    <property type="entry name" value="tRNA-synt_1g"/>
    <property type="match status" value="1"/>
</dbReference>
<dbReference type="Pfam" id="PF01588">
    <property type="entry name" value="tRNA_bind"/>
    <property type="match status" value="1"/>
</dbReference>
<dbReference type="PRINTS" id="PR01041">
    <property type="entry name" value="TRNASYNTHMET"/>
</dbReference>
<dbReference type="SUPFAM" id="SSF47323">
    <property type="entry name" value="Anticodon-binding domain of a subclass of class I aminoacyl-tRNA synthetases"/>
    <property type="match status" value="1"/>
</dbReference>
<dbReference type="SUPFAM" id="SSF57770">
    <property type="entry name" value="Methionyl-tRNA synthetase (MetRS), Zn-domain"/>
    <property type="match status" value="1"/>
</dbReference>
<dbReference type="SUPFAM" id="SSF50249">
    <property type="entry name" value="Nucleic acid-binding proteins"/>
    <property type="match status" value="1"/>
</dbReference>
<dbReference type="SUPFAM" id="SSF52374">
    <property type="entry name" value="Nucleotidylyl transferase"/>
    <property type="match status" value="1"/>
</dbReference>
<dbReference type="PROSITE" id="PS00178">
    <property type="entry name" value="AA_TRNA_LIGASE_I"/>
    <property type="match status" value="1"/>
</dbReference>
<dbReference type="PROSITE" id="PS50886">
    <property type="entry name" value="TRBD"/>
    <property type="match status" value="1"/>
</dbReference>